<comment type="function">
    <text evidence="1">Catalyzes a salvage reaction resulting in the formation of AMP, that is energically less costly than de novo synthesis.</text>
</comment>
<comment type="catalytic activity">
    <reaction evidence="1">
        <text>AMP + diphosphate = 5-phospho-alpha-D-ribose 1-diphosphate + adenine</text>
        <dbReference type="Rhea" id="RHEA:16609"/>
        <dbReference type="ChEBI" id="CHEBI:16708"/>
        <dbReference type="ChEBI" id="CHEBI:33019"/>
        <dbReference type="ChEBI" id="CHEBI:58017"/>
        <dbReference type="ChEBI" id="CHEBI:456215"/>
        <dbReference type="EC" id="2.4.2.7"/>
    </reaction>
</comment>
<comment type="pathway">
    <text evidence="1">Purine metabolism; AMP biosynthesis via salvage pathway; AMP from adenine: step 1/1.</text>
</comment>
<comment type="subunit">
    <text evidence="1">Homodimer.</text>
</comment>
<comment type="subcellular location">
    <subcellularLocation>
        <location evidence="1">Cytoplasm</location>
    </subcellularLocation>
</comment>
<comment type="similarity">
    <text evidence="1">Belongs to the purine/pyrimidine phosphoribosyltransferase family.</text>
</comment>
<reference key="1">
    <citation type="journal article" date="2005" name="Proc. Natl. Acad. Sci. U.S.A.">
        <title>Complete genome sequence of the probiotic lactic acid bacterium Lactobacillus acidophilus NCFM.</title>
        <authorList>
            <person name="Altermann E."/>
            <person name="Russell W.M."/>
            <person name="Azcarate-Peril M.A."/>
            <person name="Barrangou R."/>
            <person name="Buck B.L."/>
            <person name="McAuliffe O."/>
            <person name="Souther N."/>
            <person name="Dobson A."/>
            <person name="Duong T."/>
            <person name="Callanan M."/>
            <person name="Lick S."/>
            <person name="Hamrick A."/>
            <person name="Cano R."/>
            <person name="Klaenhammer T.R."/>
        </authorList>
    </citation>
    <scope>NUCLEOTIDE SEQUENCE [LARGE SCALE GENOMIC DNA]</scope>
    <source>
        <strain>ATCC 700396 / NCK56 / N2 / NCFM</strain>
    </source>
</reference>
<gene>
    <name evidence="1" type="primary">apt</name>
    <name type="ordered locus">LBA1242</name>
</gene>
<keyword id="KW-0963">Cytoplasm</keyword>
<keyword id="KW-0328">Glycosyltransferase</keyword>
<keyword id="KW-0660">Purine salvage</keyword>
<keyword id="KW-1185">Reference proteome</keyword>
<keyword id="KW-0808">Transferase</keyword>
<accession>Q5FJP9</accession>
<name>APT_LACAC</name>
<evidence type="ECO:0000255" key="1">
    <source>
        <dbReference type="HAMAP-Rule" id="MF_00004"/>
    </source>
</evidence>
<feature type="chain" id="PRO_0000149397" description="Adenine phosphoribosyltransferase">
    <location>
        <begin position="1"/>
        <end position="175"/>
    </location>
</feature>
<dbReference type="EC" id="2.4.2.7" evidence="1"/>
<dbReference type="EMBL" id="CP000033">
    <property type="protein sequence ID" value="AAV43075.1"/>
    <property type="molecule type" value="Genomic_DNA"/>
</dbReference>
<dbReference type="RefSeq" id="WP_003547784.1">
    <property type="nucleotide sequence ID" value="NC_006814.3"/>
</dbReference>
<dbReference type="RefSeq" id="YP_194106.1">
    <property type="nucleotide sequence ID" value="NC_006814.3"/>
</dbReference>
<dbReference type="SMR" id="Q5FJP9"/>
<dbReference type="STRING" id="272621.LBA1242"/>
<dbReference type="KEGG" id="lac:LBA1242"/>
<dbReference type="PATRIC" id="fig|272621.13.peg.1177"/>
<dbReference type="eggNOG" id="COG0503">
    <property type="taxonomic scope" value="Bacteria"/>
</dbReference>
<dbReference type="HOGENOM" id="CLU_063339_3_0_9"/>
<dbReference type="OrthoDB" id="9803963at2"/>
<dbReference type="BioCyc" id="LACI272621:G1G49-1225-MONOMER"/>
<dbReference type="UniPathway" id="UPA00588">
    <property type="reaction ID" value="UER00646"/>
</dbReference>
<dbReference type="Proteomes" id="UP000006381">
    <property type="component" value="Chromosome"/>
</dbReference>
<dbReference type="GO" id="GO:0005737">
    <property type="term" value="C:cytoplasm"/>
    <property type="evidence" value="ECO:0007669"/>
    <property type="project" value="UniProtKB-SubCell"/>
</dbReference>
<dbReference type="GO" id="GO:0002055">
    <property type="term" value="F:adenine binding"/>
    <property type="evidence" value="ECO:0007669"/>
    <property type="project" value="TreeGrafter"/>
</dbReference>
<dbReference type="GO" id="GO:0003999">
    <property type="term" value="F:adenine phosphoribosyltransferase activity"/>
    <property type="evidence" value="ECO:0007669"/>
    <property type="project" value="UniProtKB-UniRule"/>
</dbReference>
<dbReference type="GO" id="GO:0016208">
    <property type="term" value="F:AMP binding"/>
    <property type="evidence" value="ECO:0007669"/>
    <property type="project" value="TreeGrafter"/>
</dbReference>
<dbReference type="GO" id="GO:0006168">
    <property type="term" value="P:adenine salvage"/>
    <property type="evidence" value="ECO:0007669"/>
    <property type="project" value="InterPro"/>
</dbReference>
<dbReference type="GO" id="GO:0044209">
    <property type="term" value="P:AMP salvage"/>
    <property type="evidence" value="ECO:0007669"/>
    <property type="project" value="UniProtKB-UniRule"/>
</dbReference>
<dbReference type="GO" id="GO:0006166">
    <property type="term" value="P:purine ribonucleoside salvage"/>
    <property type="evidence" value="ECO:0007669"/>
    <property type="project" value="UniProtKB-KW"/>
</dbReference>
<dbReference type="CDD" id="cd06223">
    <property type="entry name" value="PRTases_typeI"/>
    <property type="match status" value="1"/>
</dbReference>
<dbReference type="FunFam" id="3.40.50.2020:FF:000004">
    <property type="entry name" value="Adenine phosphoribosyltransferase"/>
    <property type="match status" value="1"/>
</dbReference>
<dbReference type="Gene3D" id="3.40.50.2020">
    <property type="match status" value="1"/>
</dbReference>
<dbReference type="HAMAP" id="MF_00004">
    <property type="entry name" value="Aden_phosphoribosyltr"/>
    <property type="match status" value="1"/>
</dbReference>
<dbReference type="InterPro" id="IPR005764">
    <property type="entry name" value="Ade_phspho_trans"/>
</dbReference>
<dbReference type="InterPro" id="IPR000836">
    <property type="entry name" value="PRibTrfase_dom"/>
</dbReference>
<dbReference type="InterPro" id="IPR029057">
    <property type="entry name" value="PRTase-like"/>
</dbReference>
<dbReference type="InterPro" id="IPR050054">
    <property type="entry name" value="UPRTase/APRTase"/>
</dbReference>
<dbReference type="NCBIfam" id="TIGR01090">
    <property type="entry name" value="apt"/>
    <property type="match status" value="1"/>
</dbReference>
<dbReference type="NCBIfam" id="NF002633">
    <property type="entry name" value="PRK02304.1-2"/>
    <property type="match status" value="1"/>
</dbReference>
<dbReference type="NCBIfam" id="NF002634">
    <property type="entry name" value="PRK02304.1-3"/>
    <property type="match status" value="1"/>
</dbReference>
<dbReference type="NCBIfam" id="NF002636">
    <property type="entry name" value="PRK02304.1-5"/>
    <property type="match status" value="1"/>
</dbReference>
<dbReference type="PANTHER" id="PTHR32315">
    <property type="entry name" value="ADENINE PHOSPHORIBOSYLTRANSFERASE"/>
    <property type="match status" value="1"/>
</dbReference>
<dbReference type="PANTHER" id="PTHR32315:SF3">
    <property type="entry name" value="ADENINE PHOSPHORIBOSYLTRANSFERASE"/>
    <property type="match status" value="1"/>
</dbReference>
<dbReference type="Pfam" id="PF00156">
    <property type="entry name" value="Pribosyltran"/>
    <property type="match status" value="1"/>
</dbReference>
<dbReference type="SUPFAM" id="SSF53271">
    <property type="entry name" value="PRTase-like"/>
    <property type="match status" value="1"/>
</dbReference>
<dbReference type="PROSITE" id="PS00103">
    <property type="entry name" value="PUR_PYR_PR_TRANSFER"/>
    <property type="match status" value="1"/>
</dbReference>
<protein>
    <recommendedName>
        <fullName evidence="1">Adenine phosphoribosyltransferase</fullName>
        <shortName evidence="1">APRT</shortName>
        <ecNumber evidence="1">2.4.2.7</ecNumber>
    </recommendedName>
</protein>
<sequence length="175" mass="19233">MAIDFSKYIASVQDFPNKGIVFRDITPILQNGELYRAATHELAEYAKSRNADVIVGPEARGFIVGCPVATELGLGFVPARKPHKLPREVERASYDLEYGSNSLEMHKDAIKPGQRVVLCDDLMATAGTLRASKELIENLGGKLVGAAFYIELPDLKGREKLPDVDIYSLVKYHGA</sequence>
<proteinExistence type="inferred from homology"/>
<organism>
    <name type="scientific">Lactobacillus acidophilus (strain ATCC 700396 / NCK56 / N2 / NCFM)</name>
    <dbReference type="NCBI Taxonomy" id="272621"/>
    <lineage>
        <taxon>Bacteria</taxon>
        <taxon>Bacillati</taxon>
        <taxon>Bacillota</taxon>
        <taxon>Bacilli</taxon>
        <taxon>Lactobacillales</taxon>
        <taxon>Lactobacillaceae</taxon>
        <taxon>Lactobacillus</taxon>
    </lineage>
</organism>